<keyword id="KW-1185">Reference proteome</keyword>
<reference key="1">
    <citation type="journal article" date="1999" name="Science">
        <title>Genome sequence of the radioresistant bacterium Deinococcus radiodurans R1.</title>
        <authorList>
            <person name="White O."/>
            <person name="Eisen J.A."/>
            <person name="Heidelberg J.F."/>
            <person name="Hickey E.K."/>
            <person name="Peterson J.D."/>
            <person name="Dodson R.J."/>
            <person name="Haft D.H."/>
            <person name="Gwinn M.L."/>
            <person name="Nelson W.C."/>
            <person name="Richardson D.L."/>
            <person name="Moffat K.S."/>
            <person name="Qin H."/>
            <person name="Jiang L."/>
            <person name="Pamphile W."/>
            <person name="Crosby M."/>
            <person name="Shen M."/>
            <person name="Vamathevan J.J."/>
            <person name="Lam P."/>
            <person name="McDonald L.A."/>
            <person name="Utterback T.R."/>
            <person name="Zalewski C."/>
            <person name="Makarova K.S."/>
            <person name="Aravind L."/>
            <person name="Daly M.J."/>
            <person name="Minton K.W."/>
            <person name="Fleischmann R.D."/>
            <person name="Ketchum K.A."/>
            <person name="Nelson K.E."/>
            <person name="Salzberg S.L."/>
            <person name="Smith H.O."/>
            <person name="Venter J.C."/>
            <person name="Fraser C.M."/>
        </authorList>
    </citation>
    <scope>NUCLEOTIDE SEQUENCE [LARGE SCALE GENOMIC DNA]</scope>
    <source>
        <strain>ATCC 13939 / DSM 20539 / JCM 16871 / CCUG 27074 / LMG 4051 / NBRC 15346 / NCIMB 9279 / VKM B-1422 / R1</strain>
    </source>
</reference>
<feature type="chain" id="PRO_0000197946" description="Protein ApaG">
    <location>
        <begin position="1"/>
        <end position="128"/>
    </location>
</feature>
<feature type="domain" description="ApaG" evidence="1">
    <location>
        <begin position="1"/>
        <end position="123"/>
    </location>
</feature>
<proteinExistence type="inferred from homology"/>
<organism>
    <name type="scientific">Deinococcus radiodurans (strain ATCC 13939 / DSM 20539 / JCM 16871 / CCUG 27074 / LMG 4051 / NBRC 15346 / NCIMB 9279 / VKM B-1422 / R1)</name>
    <dbReference type="NCBI Taxonomy" id="243230"/>
    <lineage>
        <taxon>Bacteria</taxon>
        <taxon>Thermotogati</taxon>
        <taxon>Deinococcota</taxon>
        <taxon>Deinococci</taxon>
        <taxon>Deinococcales</taxon>
        <taxon>Deinococcaceae</taxon>
        <taxon>Deinococcus</taxon>
    </lineage>
</organism>
<gene>
    <name evidence="1" type="primary">apaG</name>
    <name type="ordered locus">DR_0228</name>
</gene>
<name>APAG_DEIRA</name>
<accession>Q9RXS8</accession>
<sequence length="128" mass="14129">MTSSPDITVSVQVHHLPAQSTPQRQLFAYFITIENNTDDSWKLLSRHWTITSGDGQQFTVEGEGVVGEQPLLAPGAQYTYNSFVTVDALPGRMEGHYVMGDAWGQTAQVPIPPFRLDIAPESGERLLN</sequence>
<protein>
    <recommendedName>
        <fullName evidence="1">Protein ApaG</fullName>
    </recommendedName>
</protein>
<dbReference type="EMBL" id="AE000513">
    <property type="protein sequence ID" value="AAF09812.1"/>
    <property type="molecule type" value="Genomic_DNA"/>
</dbReference>
<dbReference type="PIR" id="A75546">
    <property type="entry name" value="A75546"/>
</dbReference>
<dbReference type="RefSeq" id="NP_293952.1">
    <property type="nucleotide sequence ID" value="NC_001263.1"/>
</dbReference>
<dbReference type="RefSeq" id="WP_010886874.1">
    <property type="nucleotide sequence ID" value="NC_001263.1"/>
</dbReference>
<dbReference type="SMR" id="Q9RXS8"/>
<dbReference type="STRING" id="243230.DR_0228"/>
<dbReference type="PaxDb" id="243230-DR_0228"/>
<dbReference type="EnsemblBacteria" id="AAF09812">
    <property type="protein sequence ID" value="AAF09812"/>
    <property type="gene ID" value="DR_0228"/>
</dbReference>
<dbReference type="GeneID" id="69516459"/>
<dbReference type="KEGG" id="dra:DR_0228"/>
<dbReference type="PATRIC" id="fig|243230.17.peg.391"/>
<dbReference type="eggNOG" id="COG2967">
    <property type="taxonomic scope" value="Bacteria"/>
</dbReference>
<dbReference type="HOGENOM" id="CLU_128074_0_0_0"/>
<dbReference type="InParanoid" id="Q9RXS8"/>
<dbReference type="OrthoDB" id="9795226at2"/>
<dbReference type="Proteomes" id="UP000002524">
    <property type="component" value="Chromosome 1"/>
</dbReference>
<dbReference type="GO" id="GO:0070987">
    <property type="term" value="P:error-free translesion synthesis"/>
    <property type="evidence" value="ECO:0000318"/>
    <property type="project" value="GO_Central"/>
</dbReference>
<dbReference type="Gene3D" id="2.60.40.1470">
    <property type="entry name" value="ApaG domain"/>
    <property type="match status" value="1"/>
</dbReference>
<dbReference type="HAMAP" id="MF_00791">
    <property type="entry name" value="ApaG"/>
    <property type="match status" value="1"/>
</dbReference>
<dbReference type="InterPro" id="IPR007474">
    <property type="entry name" value="ApaG_domain"/>
</dbReference>
<dbReference type="InterPro" id="IPR036767">
    <property type="entry name" value="ApaG_sf"/>
</dbReference>
<dbReference type="InterPro" id="IPR023065">
    <property type="entry name" value="Uncharacterised_ApaG"/>
</dbReference>
<dbReference type="NCBIfam" id="NF003967">
    <property type="entry name" value="PRK05461.1"/>
    <property type="match status" value="1"/>
</dbReference>
<dbReference type="PANTHER" id="PTHR14289">
    <property type="entry name" value="F-BOX ONLY PROTEIN 3"/>
    <property type="match status" value="1"/>
</dbReference>
<dbReference type="PANTHER" id="PTHR14289:SF16">
    <property type="entry name" value="POLYMERASE DELTA-INTERACTING PROTEIN 2"/>
    <property type="match status" value="1"/>
</dbReference>
<dbReference type="Pfam" id="PF04379">
    <property type="entry name" value="DUF525"/>
    <property type="match status" value="1"/>
</dbReference>
<dbReference type="SUPFAM" id="SSF110069">
    <property type="entry name" value="ApaG-like"/>
    <property type="match status" value="1"/>
</dbReference>
<dbReference type="PROSITE" id="PS51087">
    <property type="entry name" value="APAG"/>
    <property type="match status" value="1"/>
</dbReference>
<evidence type="ECO:0000255" key="1">
    <source>
        <dbReference type="HAMAP-Rule" id="MF_00791"/>
    </source>
</evidence>